<accession>O06714</accession>
<accession>O06712</accession>
<accession>O06713</accession>
<organism>
    <name type="scientific">Bacillus subtilis (strain 168)</name>
    <dbReference type="NCBI Taxonomy" id="224308"/>
    <lineage>
        <taxon>Bacteria</taxon>
        <taxon>Bacillati</taxon>
        <taxon>Bacillota</taxon>
        <taxon>Bacilli</taxon>
        <taxon>Bacillales</taxon>
        <taxon>Bacillaceae</taxon>
        <taxon>Bacillus</taxon>
    </lineage>
</organism>
<feature type="chain" id="PRO_0000105861" description="Nuclease SbcCD subunit C">
    <location>
        <begin position="1"/>
        <end position="1130"/>
    </location>
</feature>
<feature type="coiled-coil region" evidence="2">
    <location>
        <begin position="115"/>
        <end position="135"/>
    </location>
</feature>
<feature type="coiled-coil region" evidence="2">
    <location>
        <begin position="179"/>
        <end position="270"/>
    </location>
</feature>
<feature type="coiled-coil region" evidence="2">
    <location>
        <begin position="344"/>
        <end position="530"/>
    </location>
</feature>
<feature type="coiled-coil region" evidence="2">
    <location>
        <begin position="652"/>
        <end position="904"/>
    </location>
</feature>
<feature type="coiled-coil region" evidence="2">
    <location>
        <begin position="940"/>
        <end position="1004"/>
    </location>
</feature>
<feature type="binding site" evidence="2">
    <location>
        <begin position="35"/>
        <end position="42"/>
    </location>
    <ligand>
        <name>ATP</name>
        <dbReference type="ChEBI" id="CHEBI:30616"/>
    </ligand>
</feature>
<feature type="sequence conflict" description="In Ref. 1; CAA70670." evidence="4" ref="1">
    <original>A</original>
    <variation>V</variation>
    <location>
        <position position="227"/>
    </location>
</feature>
<feature type="sequence conflict" description="In Ref. 1; CAA70671." evidence="4" ref="1">
    <original>QIK</original>
    <variation>PIQ</variation>
    <location>
        <begin position="788"/>
        <end position="790"/>
    </location>
</feature>
<evidence type="ECO:0000250" key="1"/>
<evidence type="ECO:0000255" key="2"/>
<evidence type="ECO:0000269" key="3">
    <source>
    </source>
</evidence>
<evidence type="ECO:0000305" key="4"/>
<sequence length="1130" mass="128921">MKPIALSIKGLHSFREEQTIDFEGLSGAGVFGIFGPTGSGKSSILDAMTLALYGKVERAANNTHGILNHAEDTLSVSFTFALQTNHQISYKVERVFKRTDEMKVKTALCRFIEIKDEHTVLADKASEVNKRVEELLGLTIDDFTRAVVLPQGKFAEFLSLKGAERRHMLQRLFNLEQYGDRLVKKLRRQAQEANARKNEMLAEQSGLGEASSEAVEQAEKVLEQAEARLEAMRKNRDQAKERFTEHQEIWNVQKEKSTYEEEEKRLAEEQPHIDSMQKRLLEAETAAALKPYADRYAEAIQHEEQAEKEQTLAQKDLADRTAFFQQKHEEYEAWRQHKSEKEPELLAKQEQLSRLQEIEIKLSEAKQEEERKKADLRQKEEALQSVMNELETVTDRLTRGQNRQTELKQQLKSLQVTSDERKSCQQAAEMALRIRQTEEQIKKEKKRSEELNLVLQKMNEEKNTLVQKTEAEENNIIQAYEAVQTVYHLVCETERSLTRMTEEARKSQHTLHLQREKARVALLTKELAQKLTAGKPCPVCGSTDHDPSASVHETYEADSHLEEDIKRTDVLLTEAAALSQEILSAKIMLEEQSARFIEQCPFLQTIQAQNLEAAASFEHQPVYEAFETAKFEWKRIKQDILSVKTRMAQMIGAYQESLKKAEQLNEKIGFEKREADRIESIISELQSSMDSSLNMFKEAFQNQSVDEAEKWQQAIEEKDRAAEECEKRIEKSIAFLAEHEAQKEKLRESGHRLEREKLELHYAAERIKSVIADYEHELGDYAKGDSIQIKLRSVQQDLKLLKEKEQSLYEELQSAQMKLNQAKSRASASELTLQEAKGRLEKAKAAWLEHTKNTSITRTEEVEQSLIPADELEKMKTGIDQFMDKLKQNAANLKRVAEILAGRALSESEWNETVAALQEAEDAFGAAIEEKGAAAKALAVIRDHHKRFNEIEAELKKWQMHIDRLDKLQAVFKGNTFVEFLAEEQLESVARDASARLSMLTRQRYAIEVDSEGGFVMRDDANGGVRRPVSSLSGGETFLTSLSLALALSAQIQLRGEYPLQFFFLDEGFGTLDQDLLDTVVTALEKLQSDNLAVGVISHVQELRARLPKKLIVHPAEPSGRGTRVSLELM</sequence>
<proteinExistence type="inferred from homology"/>
<reference key="1">
    <citation type="journal article" date="1997" name="Microbiology">
        <title>Sequencing of regions downstream of addA (98 degrees) and citG (289 degrees) in Bacillus subtilis.</title>
        <authorList>
            <person name="Medina N."/>
            <person name="Vannier F."/>
            <person name="Roche B."/>
            <person name="Autret S."/>
            <person name="Levine A."/>
            <person name="Seror S.J."/>
        </authorList>
    </citation>
    <scope>NUCLEOTIDE SEQUENCE [GENOMIC DNA]</scope>
    <source>
        <strain>168</strain>
    </source>
</reference>
<reference key="2">
    <citation type="journal article" date="1997" name="Nature">
        <title>The complete genome sequence of the Gram-positive bacterium Bacillus subtilis.</title>
        <authorList>
            <person name="Kunst F."/>
            <person name="Ogasawara N."/>
            <person name="Moszer I."/>
            <person name="Albertini A.M."/>
            <person name="Alloni G."/>
            <person name="Azevedo V."/>
            <person name="Bertero M.G."/>
            <person name="Bessieres P."/>
            <person name="Bolotin A."/>
            <person name="Borchert S."/>
            <person name="Borriss R."/>
            <person name="Boursier L."/>
            <person name="Brans A."/>
            <person name="Braun M."/>
            <person name="Brignell S.C."/>
            <person name="Bron S."/>
            <person name="Brouillet S."/>
            <person name="Bruschi C.V."/>
            <person name="Caldwell B."/>
            <person name="Capuano V."/>
            <person name="Carter N.M."/>
            <person name="Choi S.-K."/>
            <person name="Codani J.-J."/>
            <person name="Connerton I.F."/>
            <person name="Cummings N.J."/>
            <person name="Daniel R.A."/>
            <person name="Denizot F."/>
            <person name="Devine K.M."/>
            <person name="Duesterhoeft A."/>
            <person name="Ehrlich S.D."/>
            <person name="Emmerson P.T."/>
            <person name="Entian K.-D."/>
            <person name="Errington J."/>
            <person name="Fabret C."/>
            <person name="Ferrari E."/>
            <person name="Foulger D."/>
            <person name="Fritz C."/>
            <person name="Fujita M."/>
            <person name="Fujita Y."/>
            <person name="Fuma S."/>
            <person name="Galizzi A."/>
            <person name="Galleron N."/>
            <person name="Ghim S.-Y."/>
            <person name="Glaser P."/>
            <person name="Goffeau A."/>
            <person name="Golightly E.J."/>
            <person name="Grandi G."/>
            <person name="Guiseppi G."/>
            <person name="Guy B.J."/>
            <person name="Haga K."/>
            <person name="Haiech J."/>
            <person name="Harwood C.R."/>
            <person name="Henaut A."/>
            <person name="Hilbert H."/>
            <person name="Holsappel S."/>
            <person name="Hosono S."/>
            <person name="Hullo M.-F."/>
            <person name="Itaya M."/>
            <person name="Jones L.-M."/>
            <person name="Joris B."/>
            <person name="Karamata D."/>
            <person name="Kasahara Y."/>
            <person name="Klaerr-Blanchard M."/>
            <person name="Klein C."/>
            <person name="Kobayashi Y."/>
            <person name="Koetter P."/>
            <person name="Koningstein G."/>
            <person name="Krogh S."/>
            <person name="Kumano M."/>
            <person name="Kurita K."/>
            <person name="Lapidus A."/>
            <person name="Lardinois S."/>
            <person name="Lauber J."/>
            <person name="Lazarevic V."/>
            <person name="Lee S.-M."/>
            <person name="Levine A."/>
            <person name="Liu H."/>
            <person name="Masuda S."/>
            <person name="Mauel C."/>
            <person name="Medigue C."/>
            <person name="Medina N."/>
            <person name="Mellado R.P."/>
            <person name="Mizuno M."/>
            <person name="Moestl D."/>
            <person name="Nakai S."/>
            <person name="Noback M."/>
            <person name="Noone D."/>
            <person name="O'Reilly M."/>
            <person name="Ogawa K."/>
            <person name="Ogiwara A."/>
            <person name="Oudega B."/>
            <person name="Park S.-H."/>
            <person name="Parro V."/>
            <person name="Pohl T.M."/>
            <person name="Portetelle D."/>
            <person name="Porwollik S."/>
            <person name="Prescott A.M."/>
            <person name="Presecan E."/>
            <person name="Pujic P."/>
            <person name="Purnelle B."/>
            <person name="Rapoport G."/>
            <person name="Rey M."/>
            <person name="Reynolds S."/>
            <person name="Rieger M."/>
            <person name="Rivolta C."/>
            <person name="Rocha E."/>
            <person name="Roche B."/>
            <person name="Rose M."/>
            <person name="Sadaie Y."/>
            <person name="Sato T."/>
            <person name="Scanlan E."/>
            <person name="Schleich S."/>
            <person name="Schroeter R."/>
            <person name="Scoffone F."/>
            <person name="Sekiguchi J."/>
            <person name="Sekowska A."/>
            <person name="Seror S.J."/>
            <person name="Serror P."/>
            <person name="Shin B.-S."/>
            <person name="Soldo B."/>
            <person name="Sorokin A."/>
            <person name="Tacconi E."/>
            <person name="Takagi T."/>
            <person name="Takahashi H."/>
            <person name="Takemaru K."/>
            <person name="Takeuchi M."/>
            <person name="Tamakoshi A."/>
            <person name="Tanaka T."/>
            <person name="Terpstra P."/>
            <person name="Tognoni A."/>
            <person name="Tosato V."/>
            <person name="Uchiyama S."/>
            <person name="Vandenbol M."/>
            <person name="Vannier F."/>
            <person name="Vassarotti A."/>
            <person name="Viari A."/>
            <person name="Wambutt R."/>
            <person name="Wedler E."/>
            <person name="Wedler H."/>
            <person name="Weitzenegger T."/>
            <person name="Winters P."/>
            <person name="Wipat A."/>
            <person name="Yamamoto H."/>
            <person name="Yamane K."/>
            <person name="Yasumoto K."/>
            <person name="Yata K."/>
            <person name="Yoshida K."/>
            <person name="Yoshikawa H.-F."/>
            <person name="Zumstein E."/>
            <person name="Yoshikawa H."/>
            <person name="Danchin A."/>
        </authorList>
    </citation>
    <scope>NUCLEOTIDE SEQUENCE [LARGE SCALE GENOMIC DNA]</scope>
    <source>
        <strain>168</strain>
    </source>
</reference>
<reference key="3">
    <citation type="journal article" date="2009" name="Microbiology">
        <title>From a consortium sequence to a unified sequence: the Bacillus subtilis 168 reference genome a decade later.</title>
        <authorList>
            <person name="Barbe V."/>
            <person name="Cruveiller S."/>
            <person name="Kunst F."/>
            <person name="Lenoble P."/>
            <person name="Meurice G."/>
            <person name="Sekowska A."/>
            <person name="Vallenet D."/>
            <person name="Wang T."/>
            <person name="Moszer I."/>
            <person name="Medigue C."/>
            <person name="Danchin A."/>
        </authorList>
    </citation>
    <scope>SEQUENCE REVISION TO 227 AND 788-790</scope>
</reference>
<reference key="4">
    <citation type="journal article" date="2010" name="PLoS Genet.">
        <title>The C-terminal domain of the bacterial SSB protein acts as a DNA maintenance hub at active chromosome replication forks.</title>
        <authorList>
            <person name="Costes A."/>
            <person name="Lecointe F."/>
            <person name="McGovern S."/>
            <person name="Quevillon-Cheruel S."/>
            <person name="Polard P."/>
        </authorList>
    </citation>
    <scope>SUBCELLULAR LOCATION</scope>
    <source>
        <strain>168</strain>
    </source>
</reference>
<dbReference type="EMBL" id="Y09476">
    <property type="protein sequence ID" value="CAA70670.1"/>
    <property type="status" value="ALT_FRAME"/>
    <property type="molecule type" value="Genomic_DNA"/>
</dbReference>
<dbReference type="EMBL" id="Y09476">
    <property type="protein sequence ID" value="CAA70671.1"/>
    <property type="status" value="ALT_FRAME"/>
    <property type="molecule type" value="Genomic_DNA"/>
</dbReference>
<dbReference type="EMBL" id="Y09476">
    <property type="protein sequence ID" value="CAA70672.1"/>
    <property type="status" value="ALT_FRAME"/>
    <property type="molecule type" value="Genomic_DNA"/>
</dbReference>
<dbReference type="EMBL" id="AL009126">
    <property type="protein sequence ID" value="CAB12905.2"/>
    <property type="molecule type" value="Genomic_DNA"/>
</dbReference>
<dbReference type="PIR" id="A69836">
    <property type="entry name" value="A69836"/>
</dbReference>
<dbReference type="RefSeq" id="NP_388946.2">
    <property type="nucleotide sequence ID" value="NC_000964.3"/>
</dbReference>
<dbReference type="RefSeq" id="WP_003245201.1">
    <property type="nucleotide sequence ID" value="NZ_OZ025638.1"/>
</dbReference>
<dbReference type="FunCoup" id="O06714">
    <property type="interactions" value="67"/>
</dbReference>
<dbReference type="IntAct" id="O06714">
    <property type="interactions" value="3"/>
</dbReference>
<dbReference type="STRING" id="224308.BSU10650"/>
<dbReference type="PaxDb" id="224308-BSU10650"/>
<dbReference type="EnsemblBacteria" id="CAB12905">
    <property type="protein sequence ID" value="CAB12905"/>
    <property type="gene ID" value="BSU_10650"/>
</dbReference>
<dbReference type="GeneID" id="939784"/>
<dbReference type="KEGG" id="bsu:BSU10650"/>
<dbReference type="PATRIC" id="fig|224308.179.peg.1145"/>
<dbReference type="eggNOG" id="COG0419">
    <property type="taxonomic scope" value="Bacteria"/>
</dbReference>
<dbReference type="InParanoid" id="O06714"/>
<dbReference type="OrthoDB" id="9795626at2"/>
<dbReference type="PhylomeDB" id="O06714"/>
<dbReference type="BioCyc" id="BSUB:BSU10650-MONOMER"/>
<dbReference type="Proteomes" id="UP000001570">
    <property type="component" value="Chromosome"/>
</dbReference>
<dbReference type="GO" id="GO:0005737">
    <property type="term" value="C:cytoplasm"/>
    <property type="evidence" value="ECO:0007669"/>
    <property type="project" value="UniProtKB-KW"/>
</dbReference>
<dbReference type="GO" id="GO:1990391">
    <property type="term" value="C:DNA repair complex"/>
    <property type="evidence" value="ECO:0000318"/>
    <property type="project" value="GO_Central"/>
</dbReference>
<dbReference type="GO" id="GO:0009295">
    <property type="term" value="C:nucleoid"/>
    <property type="evidence" value="ECO:0007669"/>
    <property type="project" value="UniProtKB-SubCell"/>
</dbReference>
<dbReference type="GO" id="GO:0005524">
    <property type="term" value="F:ATP binding"/>
    <property type="evidence" value="ECO:0007669"/>
    <property type="project" value="UniProtKB-KW"/>
</dbReference>
<dbReference type="GO" id="GO:0004529">
    <property type="term" value="F:DNA exonuclease activity"/>
    <property type="evidence" value="ECO:0000318"/>
    <property type="project" value="GO_Central"/>
</dbReference>
<dbReference type="GO" id="GO:0004519">
    <property type="term" value="F:endonuclease activity"/>
    <property type="evidence" value="ECO:0007669"/>
    <property type="project" value="UniProtKB-KW"/>
</dbReference>
<dbReference type="GO" id="GO:0006310">
    <property type="term" value="P:DNA recombination"/>
    <property type="evidence" value="ECO:0007669"/>
    <property type="project" value="UniProtKB-KW"/>
</dbReference>
<dbReference type="GO" id="GO:0006281">
    <property type="term" value="P:DNA repair"/>
    <property type="evidence" value="ECO:0000318"/>
    <property type="project" value="GO_Central"/>
</dbReference>
<dbReference type="GO" id="GO:0006260">
    <property type="term" value="P:DNA replication"/>
    <property type="evidence" value="ECO:0007669"/>
    <property type="project" value="UniProtKB-KW"/>
</dbReference>
<dbReference type="CDD" id="cd03279">
    <property type="entry name" value="ABC_sbcCD"/>
    <property type="match status" value="1"/>
</dbReference>
<dbReference type="Gene3D" id="3.40.50.300">
    <property type="entry name" value="P-loop containing nucleotide triphosphate hydrolases"/>
    <property type="match status" value="2"/>
</dbReference>
<dbReference type="InterPro" id="IPR027417">
    <property type="entry name" value="P-loop_NTPase"/>
</dbReference>
<dbReference type="InterPro" id="IPR053614">
    <property type="entry name" value="SMC_SbcC-like_nuclease"/>
</dbReference>
<dbReference type="NCBIfam" id="NF041752">
    <property type="entry name" value="sbcc_Bac"/>
    <property type="match status" value="1"/>
</dbReference>
<dbReference type="PANTHER" id="PTHR32114">
    <property type="entry name" value="ABC TRANSPORTER ABCH.3"/>
    <property type="match status" value="1"/>
</dbReference>
<dbReference type="PANTHER" id="PTHR32114:SF2">
    <property type="entry name" value="ABC TRANSPORTER ABCH.3"/>
    <property type="match status" value="1"/>
</dbReference>
<dbReference type="Pfam" id="PF13555">
    <property type="entry name" value="AAA_29"/>
    <property type="match status" value="1"/>
</dbReference>
<dbReference type="Pfam" id="PF13558">
    <property type="entry name" value="SbcC_Walker_B"/>
    <property type="match status" value="1"/>
</dbReference>
<dbReference type="SUPFAM" id="SSF52540">
    <property type="entry name" value="P-loop containing nucleoside triphosphate hydrolases"/>
    <property type="match status" value="2"/>
</dbReference>
<keyword id="KW-0067">ATP-binding</keyword>
<keyword id="KW-0175">Coiled coil</keyword>
<keyword id="KW-0963">Cytoplasm</keyword>
<keyword id="KW-0233">DNA recombination</keyword>
<keyword id="KW-0235">DNA replication</keyword>
<keyword id="KW-0255">Endonuclease</keyword>
<keyword id="KW-0269">Exonuclease</keyword>
<keyword id="KW-0378">Hydrolase</keyword>
<keyword id="KW-0540">Nuclease</keyword>
<keyword id="KW-0547">Nucleotide-binding</keyword>
<keyword id="KW-1185">Reference proteome</keyword>
<name>SBCC_BACSU</name>
<gene>
    <name type="primary">sbcC</name>
    <name type="synonym">yirY</name>
    <name type="ordered locus">BSU10650</name>
</gene>
<comment type="function">
    <text evidence="1">SbcCD cleaves DNA hairpin structures. These structures can inhibit DNA replication and are intermediates in certain DNA recombination reactions. The complex acts as a 3'-&gt;5' double strand exonuclease that can open hairpins. It also has a 5' single-strand endonuclease activity (By similarity).</text>
</comment>
<comment type="subunit">
    <text evidence="1">Heterodimer of SbcC and SbcD.</text>
</comment>
<comment type="subcellular location">
    <subcellularLocation>
        <location evidence="3">Cytoplasm</location>
        <location evidence="3">Nucleoid</location>
    </subcellularLocation>
    <text evidence="3">Localizes in tight foci on the nucleoid; targeted to the nucleoid via the 35 C-terminal residues of SSB (ssbA) (PubMed:21170359).</text>
</comment>
<comment type="similarity">
    <text evidence="4">Belongs to the SMC family. SbcC subfamily.</text>
</comment>
<comment type="sequence caution" evidence="4">
    <conflict type="frameshift">
        <sequence resource="EMBL-CDS" id="CAA70670"/>
    </conflict>
</comment>
<comment type="sequence caution" evidence="4">
    <conflict type="frameshift">
        <sequence resource="EMBL-CDS" id="CAA70671"/>
    </conflict>
</comment>
<comment type="sequence caution" evidence="4">
    <conflict type="frameshift">
        <sequence resource="EMBL-CDS" id="CAA70672"/>
    </conflict>
</comment>
<protein>
    <recommendedName>
        <fullName>Nuclease SbcCD subunit C</fullName>
    </recommendedName>
</protein>